<dbReference type="EMBL" id="AP008934">
    <property type="protein sequence ID" value="BAE19366.1"/>
    <property type="molecule type" value="Genomic_DNA"/>
</dbReference>
<dbReference type="SMR" id="Q49V44"/>
<dbReference type="KEGG" id="ssp:SSP2221"/>
<dbReference type="eggNOG" id="COG0267">
    <property type="taxonomic scope" value="Bacteria"/>
</dbReference>
<dbReference type="HOGENOM" id="CLU_190949_0_1_9"/>
<dbReference type="OrthoDB" id="9801333at2"/>
<dbReference type="Proteomes" id="UP000006371">
    <property type="component" value="Chromosome"/>
</dbReference>
<dbReference type="GO" id="GO:0005737">
    <property type="term" value="C:cytoplasm"/>
    <property type="evidence" value="ECO:0007669"/>
    <property type="project" value="UniProtKB-ARBA"/>
</dbReference>
<dbReference type="GO" id="GO:1990904">
    <property type="term" value="C:ribonucleoprotein complex"/>
    <property type="evidence" value="ECO:0007669"/>
    <property type="project" value="UniProtKB-KW"/>
</dbReference>
<dbReference type="GO" id="GO:0005840">
    <property type="term" value="C:ribosome"/>
    <property type="evidence" value="ECO:0007669"/>
    <property type="project" value="UniProtKB-KW"/>
</dbReference>
<dbReference type="GO" id="GO:0003735">
    <property type="term" value="F:structural constituent of ribosome"/>
    <property type="evidence" value="ECO:0007669"/>
    <property type="project" value="InterPro"/>
</dbReference>
<dbReference type="GO" id="GO:0006412">
    <property type="term" value="P:translation"/>
    <property type="evidence" value="ECO:0007669"/>
    <property type="project" value="UniProtKB-UniRule"/>
</dbReference>
<dbReference type="Gene3D" id="2.20.28.120">
    <property type="entry name" value="Ribosomal protein L33"/>
    <property type="match status" value="1"/>
</dbReference>
<dbReference type="HAMAP" id="MF_00294">
    <property type="entry name" value="Ribosomal_bL33"/>
    <property type="match status" value="1"/>
</dbReference>
<dbReference type="InterPro" id="IPR001705">
    <property type="entry name" value="Ribosomal_bL33"/>
</dbReference>
<dbReference type="InterPro" id="IPR018264">
    <property type="entry name" value="Ribosomal_bL33_CS"/>
</dbReference>
<dbReference type="InterPro" id="IPR038584">
    <property type="entry name" value="Ribosomal_bL33_sf"/>
</dbReference>
<dbReference type="InterPro" id="IPR011332">
    <property type="entry name" value="Ribosomal_zn-bd"/>
</dbReference>
<dbReference type="NCBIfam" id="NF001764">
    <property type="entry name" value="PRK00504.1"/>
    <property type="match status" value="1"/>
</dbReference>
<dbReference type="NCBIfam" id="TIGR01023">
    <property type="entry name" value="rpmG_bact"/>
    <property type="match status" value="1"/>
</dbReference>
<dbReference type="Pfam" id="PF00471">
    <property type="entry name" value="Ribosomal_L33"/>
    <property type="match status" value="1"/>
</dbReference>
<dbReference type="SUPFAM" id="SSF57829">
    <property type="entry name" value="Zn-binding ribosomal proteins"/>
    <property type="match status" value="1"/>
</dbReference>
<dbReference type="PROSITE" id="PS00582">
    <property type="entry name" value="RIBOSOMAL_L33"/>
    <property type="match status" value="1"/>
</dbReference>
<reference key="1">
    <citation type="journal article" date="2005" name="Proc. Natl. Acad. Sci. U.S.A.">
        <title>Whole genome sequence of Staphylococcus saprophyticus reveals the pathogenesis of uncomplicated urinary tract infection.</title>
        <authorList>
            <person name="Kuroda M."/>
            <person name="Yamashita A."/>
            <person name="Hirakawa H."/>
            <person name="Kumano M."/>
            <person name="Morikawa K."/>
            <person name="Higashide M."/>
            <person name="Maruyama A."/>
            <person name="Inose Y."/>
            <person name="Matoba K."/>
            <person name="Toh H."/>
            <person name="Kuhara S."/>
            <person name="Hattori M."/>
            <person name="Ohta T."/>
        </authorList>
    </citation>
    <scope>NUCLEOTIDE SEQUENCE [LARGE SCALE GENOMIC DNA]</scope>
    <source>
        <strain>ATCC 15305 / DSM 20229 / NCIMB 8711 / NCTC 7292 / S-41</strain>
    </source>
</reference>
<gene>
    <name evidence="1" type="primary">rpmG3</name>
    <name type="ordered locus">SSP2221</name>
</gene>
<accession>Q49V44</accession>
<keyword id="KW-1185">Reference proteome</keyword>
<keyword id="KW-0687">Ribonucleoprotein</keyword>
<keyword id="KW-0689">Ribosomal protein</keyword>
<sequence length="47" mass="5444">MKKVPLNCEVCGNRNYNVPKQSNLASRLELKKYCPRCNAHTLHKESK</sequence>
<proteinExistence type="inferred from homology"/>
<protein>
    <recommendedName>
        <fullName evidence="1">Large ribosomal subunit protein bL33C</fullName>
    </recommendedName>
    <alternativeName>
        <fullName evidence="1">50S ribosomal protein L33 3</fullName>
    </alternativeName>
</protein>
<evidence type="ECO:0000255" key="1">
    <source>
        <dbReference type="HAMAP-Rule" id="MF_00294"/>
    </source>
</evidence>
<comment type="similarity">
    <text evidence="1">Belongs to the bacterial ribosomal protein bL33 family.</text>
</comment>
<feature type="chain" id="PRO_0000356700" description="Large ribosomal subunit protein bL33C">
    <location>
        <begin position="1"/>
        <end position="47"/>
    </location>
</feature>
<name>RL333_STAS1</name>
<organism>
    <name type="scientific">Staphylococcus saprophyticus subsp. saprophyticus (strain ATCC 15305 / DSM 20229 / NCIMB 8711 / NCTC 7292 / S-41)</name>
    <dbReference type="NCBI Taxonomy" id="342451"/>
    <lineage>
        <taxon>Bacteria</taxon>
        <taxon>Bacillati</taxon>
        <taxon>Bacillota</taxon>
        <taxon>Bacilli</taxon>
        <taxon>Bacillales</taxon>
        <taxon>Staphylococcaceae</taxon>
        <taxon>Staphylococcus</taxon>
    </lineage>
</organism>